<feature type="chain" id="PRO_1000128067" description="Small ribosomal subunit protein uS9">
    <location>
        <begin position="1"/>
        <end position="131"/>
    </location>
</feature>
<dbReference type="EMBL" id="CP000687">
    <property type="protein sequence ID" value="ABY69165.1"/>
    <property type="molecule type" value="Genomic_DNA"/>
</dbReference>
<dbReference type="RefSeq" id="WP_005596852.1">
    <property type="nucleotide sequence ID" value="NC_010278.1"/>
</dbReference>
<dbReference type="SMR" id="B0BUG0"/>
<dbReference type="GeneID" id="48598790"/>
<dbReference type="KEGG" id="apj:APJL_0595"/>
<dbReference type="HOGENOM" id="CLU_046483_2_1_6"/>
<dbReference type="Proteomes" id="UP000008547">
    <property type="component" value="Chromosome"/>
</dbReference>
<dbReference type="GO" id="GO:0022627">
    <property type="term" value="C:cytosolic small ribosomal subunit"/>
    <property type="evidence" value="ECO:0007669"/>
    <property type="project" value="TreeGrafter"/>
</dbReference>
<dbReference type="GO" id="GO:0003723">
    <property type="term" value="F:RNA binding"/>
    <property type="evidence" value="ECO:0007669"/>
    <property type="project" value="TreeGrafter"/>
</dbReference>
<dbReference type="GO" id="GO:0003735">
    <property type="term" value="F:structural constituent of ribosome"/>
    <property type="evidence" value="ECO:0007669"/>
    <property type="project" value="InterPro"/>
</dbReference>
<dbReference type="GO" id="GO:0006412">
    <property type="term" value="P:translation"/>
    <property type="evidence" value="ECO:0007669"/>
    <property type="project" value="UniProtKB-UniRule"/>
</dbReference>
<dbReference type="FunFam" id="3.30.230.10:FF:000001">
    <property type="entry name" value="30S ribosomal protein S9"/>
    <property type="match status" value="1"/>
</dbReference>
<dbReference type="Gene3D" id="3.30.230.10">
    <property type="match status" value="1"/>
</dbReference>
<dbReference type="HAMAP" id="MF_00532_B">
    <property type="entry name" value="Ribosomal_uS9_B"/>
    <property type="match status" value="1"/>
</dbReference>
<dbReference type="InterPro" id="IPR020568">
    <property type="entry name" value="Ribosomal_Su5_D2-typ_SF"/>
</dbReference>
<dbReference type="InterPro" id="IPR000754">
    <property type="entry name" value="Ribosomal_uS9"/>
</dbReference>
<dbReference type="InterPro" id="IPR023035">
    <property type="entry name" value="Ribosomal_uS9_bac/plastid"/>
</dbReference>
<dbReference type="InterPro" id="IPR020574">
    <property type="entry name" value="Ribosomal_uS9_CS"/>
</dbReference>
<dbReference type="InterPro" id="IPR014721">
    <property type="entry name" value="Ribsml_uS5_D2-typ_fold_subgr"/>
</dbReference>
<dbReference type="NCBIfam" id="NF001099">
    <property type="entry name" value="PRK00132.1"/>
    <property type="match status" value="1"/>
</dbReference>
<dbReference type="PANTHER" id="PTHR21569">
    <property type="entry name" value="RIBOSOMAL PROTEIN S9"/>
    <property type="match status" value="1"/>
</dbReference>
<dbReference type="PANTHER" id="PTHR21569:SF1">
    <property type="entry name" value="SMALL RIBOSOMAL SUBUNIT PROTEIN US9M"/>
    <property type="match status" value="1"/>
</dbReference>
<dbReference type="Pfam" id="PF00380">
    <property type="entry name" value="Ribosomal_S9"/>
    <property type="match status" value="1"/>
</dbReference>
<dbReference type="SUPFAM" id="SSF54211">
    <property type="entry name" value="Ribosomal protein S5 domain 2-like"/>
    <property type="match status" value="1"/>
</dbReference>
<dbReference type="PROSITE" id="PS00360">
    <property type="entry name" value="RIBOSOMAL_S9"/>
    <property type="match status" value="1"/>
</dbReference>
<sequence>MTAANQNYGTGRRKSSSARVFIKPGNGNITINQRSLDVYFGRETSRMVVRQPLELVELLDKLDLYITVKGGGISGQAGAIRHGITRALMEYDETLRPALRAAGFVTRDARRVERKKVGLHKARRRPQYSKR</sequence>
<accession>B0BUG0</accession>
<organism>
    <name type="scientific">Actinobacillus pleuropneumoniae serotype 3 (strain JL03)</name>
    <dbReference type="NCBI Taxonomy" id="434271"/>
    <lineage>
        <taxon>Bacteria</taxon>
        <taxon>Pseudomonadati</taxon>
        <taxon>Pseudomonadota</taxon>
        <taxon>Gammaproteobacteria</taxon>
        <taxon>Pasteurellales</taxon>
        <taxon>Pasteurellaceae</taxon>
        <taxon>Actinobacillus</taxon>
    </lineage>
</organism>
<comment type="similarity">
    <text evidence="1">Belongs to the universal ribosomal protein uS9 family.</text>
</comment>
<reference key="1">
    <citation type="journal article" date="2008" name="PLoS ONE">
        <title>Genome biology of Actinobacillus pleuropneumoniae JL03, an isolate of serotype 3 prevalent in China.</title>
        <authorList>
            <person name="Xu Z."/>
            <person name="Zhou Y."/>
            <person name="Li L."/>
            <person name="Zhou R."/>
            <person name="Xiao S."/>
            <person name="Wan Y."/>
            <person name="Zhang S."/>
            <person name="Wang K."/>
            <person name="Li W."/>
            <person name="Li L."/>
            <person name="Jin H."/>
            <person name="Kang M."/>
            <person name="Dalai B."/>
            <person name="Li T."/>
            <person name="Liu L."/>
            <person name="Cheng Y."/>
            <person name="Zhang L."/>
            <person name="Xu T."/>
            <person name="Zheng H."/>
            <person name="Pu S."/>
            <person name="Wang B."/>
            <person name="Gu W."/>
            <person name="Zhang X.L."/>
            <person name="Zhu G.-F."/>
            <person name="Wang S."/>
            <person name="Zhao G.-P."/>
            <person name="Chen H."/>
        </authorList>
    </citation>
    <scope>NUCLEOTIDE SEQUENCE [LARGE SCALE GENOMIC DNA]</scope>
    <source>
        <strain>JL03</strain>
    </source>
</reference>
<gene>
    <name evidence="1" type="primary">rpsI</name>
    <name type="ordered locus">APJL_0595</name>
</gene>
<proteinExistence type="inferred from homology"/>
<name>RS9_ACTPJ</name>
<evidence type="ECO:0000255" key="1">
    <source>
        <dbReference type="HAMAP-Rule" id="MF_00532"/>
    </source>
</evidence>
<evidence type="ECO:0000305" key="2"/>
<protein>
    <recommendedName>
        <fullName evidence="1">Small ribosomal subunit protein uS9</fullName>
    </recommendedName>
    <alternativeName>
        <fullName evidence="2">30S ribosomal protein S9</fullName>
    </alternativeName>
</protein>
<keyword id="KW-0687">Ribonucleoprotein</keyword>
<keyword id="KW-0689">Ribosomal protein</keyword>